<evidence type="ECO:0000255" key="1">
    <source>
        <dbReference type="PROSITE-ProRule" id="PRU00179"/>
    </source>
</evidence>
<evidence type="ECO:0000256" key="2">
    <source>
        <dbReference type="SAM" id="MobiDB-lite"/>
    </source>
</evidence>
<evidence type="ECO:0000269" key="3">
    <source>
    </source>
</evidence>
<evidence type="ECO:0000269" key="4">
    <source>
    </source>
</evidence>
<evidence type="ECO:0000269" key="5">
    <source>
    </source>
</evidence>
<evidence type="ECO:0000269" key="6">
    <source>
    </source>
</evidence>
<evidence type="ECO:0000305" key="7"/>
<evidence type="ECO:0007744" key="8">
    <source>
    </source>
</evidence>
<evidence type="ECO:0007829" key="9">
    <source>
        <dbReference type="PDB" id="8ADL"/>
    </source>
</evidence>
<evidence type="ECO:0007829" key="10">
    <source>
        <dbReference type="PDB" id="8AE6"/>
    </source>
</evidence>
<comment type="function">
    <text evidence="5 6">Component of the SEA complex which coats the vacuolar membrane and is involved in intracellular trafficking, autophagy, response to nitrogen starvation, and amino acid biogenesis. May be involved in telomere capping.</text>
</comment>
<comment type="subunit">
    <text evidence="6">Component of the SEA complex composed of at least IML1/SEA1, RTC1/SEA2, MTC5/SEA3, NPR2, NPR3, SEA4, SEC13 and SEH1.</text>
</comment>
<comment type="interaction">
    <interactant intactId="EBI-32422">
        <id>Q03897</id>
    </interactant>
    <interactant intactId="EBI-16529">
        <id>Q04491</id>
        <label>SEC13</label>
    </interactant>
    <organismsDiffer>false</organismsDiffer>
    <experiments>6</experiments>
</comment>
<comment type="subcellular location">
    <subcellularLocation>
        <location evidence="3 6">Vacuole membrane</location>
        <topology evidence="3 6">Peripheral membrane protein</topology>
    </subcellularLocation>
</comment>
<comment type="miscellaneous">
    <text evidence="4">Present with 556 molecules/cell in log phase SD medium.</text>
</comment>
<comment type="similarity">
    <text evidence="7">Belongs to the WD repeat WDR59 family.</text>
</comment>
<protein>
    <recommendedName>
        <fullName>Maintenance of telomere capping protein 5</fullName>
    </recommendedName>
    <alternativeName>
        <fullName>SEH-associated protein 3</fullName>
    </alternativeName>
</protein>
<organism>
    <name type="scientific">Saccharomyces cerevisiae (strain ATCC 204508 / S288c)</name>
    <name type="common">Baker's yeast</name>
    <dbReference type="NCBI Taxonomy" id="559292"/>
    <lineage>
        <taxon>Eukaryota</taxon>
        <taxon>Fungi</taxon>
        <taxon>Dikarya</taxon>
        <taxon>Ascomycota</taxon>
        <taxon>Saccharomycotina</taxon>
        <taxon>Saccharomycetes</taxon>
        <taxon>Saccharomycetales</taxon>
        <taxon>Saccharomycetaceae</taxon>
        <taxon>Saccharomyces</taxon>
    </lineage>
</organism>
<accession>Q03897</accession>
<accession>D6VSB4</accession>
<name>WDR59_YEAST</name>
<dbReference type="EMBL" id="Z48179">
    <property type="protein sequence ID" value="CAA88209.1"/>
    <property type="molecule type" value="Genomic_DNA"/>
</dbReference>
<dbReference type="EMBL" id="BK006938">
    <property type="protein sequence ID" value="DAA11974.1"/>
    <property type="molecule type" value="Genomic_DNA"/>
</dbReference>
<dbReference type="PIR" id="S51855">
    <property type="entry name" value="S51855"/>
</dbReference>
<dbReference type="RefSeq" id="NP_010413.3">
    <property type="nucleotide sequence ID" value="NM_001180436.3"/>
</dbReference>
<dbReference type="PDB" id="8ADL">
    <property type="method" value="EM"/>
    <property type="resolution" value="2.95 A"/>
    <property type="chains" value="C/Q=1-1148"/>
</dbReference>
<dbReference type="PDB" id="8AE6">
    <property type="method" value="EM"/>
    <property type="resolution" value="2.70 A"/>
    <property type="chains" value="Q=1-1148"/>
</dbReference>
<dbReference type="PDBsum" id="8ADL"/>
<dbReference type="PDBsum" id="8AE6"/>
<dbReference type="EMDB" id="EMD-15364"/>
<dbReference type="EMDB" id="EMD-15381"/>
<dbReference type="SMR" id="Q03897"/>
<dbReference type="BioGRID" id="32184">
    <property type="interactions" value="328"/>
</dbReference>
<dbReference type="ComplexPortal" id="CPX-3231">
    <property type="entry name" value="SEA complex"/>
</dbReference>
<dbReference type="DIP" id="DIP-1825N"/>
<dbReference type="FunCoup" id="Q03897">
    <property type="interactions" value="445"/>
</dbReference>
<dbReference type="IntAct" id="Q03897">
    <property type="interactions" value="65"/>
</dbReference>
<dbReference type="MINT" id="Q03897"/>
<dbReference type="STRING" id="4932.YDR128W"/>
<dbReference type="iPTMnet" id="Q03897"/>
<dbReference type="PaxDb" id="4932-YDR128W"/>
<dbReference type="PeptideAtlas" id="Q03897"/>
<dbReference type="EnsemblFungi" id="YDR128W_mRNA">
    <property type="protein sequence ID" value="YDR128W"/>
    <property type="gene ID" value="YDR128W"/>
</dbReference>
<dbReference type="GeneID" id="851706"/>
<dbReference type="KEGG" id="sce:YDR128W"/>
<dbReference type="AGR" id="SGD:S000002535"/>
<dbReference type="SGD" id="S000002535">
    <property type="gene designation" value="MTC5"/>
</dbReference>
<dbReference type="VEuPathDB" id="FungiDB:YDR128W"/>
<dbReference type="eggNOG" id="KOG0309">
    <property type="taxonomic scope" value="Eukaryota"/>
</dbReference>
<dbReference type="GeneTree" id="ENSGT00940000171305"/>
<dbReference type="HOGENOM" id="CLU_001497_0_0_1"/>
<dbReference type="InParanoid" id="Q03897"/>
<dbReference type="OMA" id="HRRETCL"/>
<dbReference type="OrthoDB" id="311712at2759"/>
<dbReference type="BioCyc" id="YEAST:G3O-29727-MONOMER"/>
<dbReference type="BioGRID-ORCS" id="851706">
    <property type="hits" value="6 hits in 10 CRISPR screens"/>
</dbReference>
<dbReference type="PRO" id="PR:Q03897"/>
<dbReference type="Proteomes" id="UP000002311">
    <property type="component" value="Chromosome IV"/>
</dbReference>
<dbReference type="RNAct" id="Q03897">
    <property type="molecule type" value="protein"/>
</dbReference>
<dbReference type="GO" id="GO:0000329">
    <property type="term" value="C:fungal-type vacuole membrane"/>
    <property type="evidence" value="ECO:0007005"/>
    <property type="project" value="SGD"/>
</dbReference>
<dbReference type="GO" id="GO:0035859">
    <property type="term" value="C:Seh1-associated complex"/>
    <property type="evidence" value="ECO:0000314"/>
    <property type="project" value="SGD"/>
</dbReference>
<dbReference type="GO" id="GO:0005774">
    <property type="term" value="C:vacuolar membrane"/>
    <property type="evidence" value="ECO:0000318"/>
    <property type="project" value="GO_Central"/>
</dbReference>
<dbReference type="GO" id="GO:0035591">
    <property type="term" value="F:signaling adaptor activity"/>
    <property type="evidence" value="ECO:0000318"/>
    <property type="project" value="GO_Central"/>
</dbReference>
<dbReference type="GO" id="GO:0034198">
    <property type="term" value="P:cellular response to amino acid starvation"/>
    <property type="evidence" value="ECO:0000318"/>
    <property type="project" value="GO_Central"/>
</dbReference>
<dbReference type="GO" id="GO:1904263">
    <property type="term" value="P:positive regulation of TORC1 signaling"/>
    <property type="evidence" value="ECO:0000316"/>
    <property type="project" value="SGD"/>
</dbReference>
<dbReference type="GO" id="GO:0015031">
    <property type="term" value="P:protein transport"/>
    <property type="evidence" value="ECO:0007669"/>
    <property type="project" value="UniProtKB-KW"/>
</dbReference>
<dbReference type="GO" id="GO:1903432">
    <property type="term" value="P:regulation of TORC1 signaling"/>
    <property type="evidence" value="ECO:0000314"/>
    <property type="project" value="ComplexPortal"/>
</dbReference>
<dbReference type="CDD" id="cd16488">
    <property type="entry name" value="mRING-H2-C3H3C2_Mio-like"/>
    <property type="match status" value="1"/>
</dbReference>
<dbReference type="Gene3D" id="2.130.10.10">
    <property type="entry name" value="YVTN repeat-like/Quinoprotein amine dehydrogenase"/>
    <property type="match status" value="1"/>
</dbReference>
<dbReference type="InterPro" id="IPR006575">
    <property type="entry name" value="RWD_dom"/>
</dbReference>
<dbReference type="InterPro" id="IPR015943">
    <property type="entry name" value="WD40/YVTN_repeat-like_dom_sf"/>
</dbReference>
<dbReference type="InterPro" id="IPR019775">
    <property type="entry name" value="WD40_repeat_CS"/>
</dbReference>
<dbReference type="InterPro" id="IPR036322">
    <property type="entry name" value="WD40_repeat_dom_sf"/>
</dbReference>
<dbReference type="InterPro" id="IPR001680">
    <property type="entry name" value="WD40_rpt"/>
</dbReference>
<dbReference type="InterPro" id="IPR049567">
    <property type="entry name" value="WDR59-like"/>
</dbReference>
<dbReference type="InterPro" id="IPR049566">
    <property type="entry name" value="WDR59_RTC1-like_RING_Znf"/>
</dbReference>
<dbReference type="PANTHER" id="PTHR46170">
    <property type="entry name" value="GATOR COMPLEX PROTEIN WDR59"/>
    <property type="match status" value="1"/>
</dbReference>
<dbReference type="PANTHER" id="PTHR46170:SF1">
    <property type="entry name" value="GATOR COMPLEX PROTEIN WDR59"/>
    <property type="match status" value="1"/>
</dbReference>
<dbReference type="Pfam" id="PF05773">
    <property type="entry name" value="RWD"/>
    <property type="match status" value="1"/>
</dbReference>
<dbReference type="Pfam" id="PF00400">
    <property type="entry name" value="WD40"/>
    <property type="match status" value="2"/>
</dbReference>
<dbReference type="Pfam" id="PF17120">
    <property type="entry name" value="zf-RING_16"/>
    <property type="match status" value="1"/>
</dbReference>
<dbReference type="SMART" id="SM00591">
    <property type="entry name" value="RWD"/>
    <property type="match status" value="1"/>
</dbReference>
<dbReference type="SMART" id="SM00320">
    <property type="entry name" value="WD40"/>
    <property type="match status" value="6"/>
</dbReference>
<dbReference type="SUPFAM" id="SSF50978">
    <property type="entry name" value="WD40 repeat-like"/>
    <property type="match status" value="1"/>
</dbReference>
<dbReference type="PROSITE" id="PS50908">
    <property type="entry name" value="RWD"/>
    <property type="match status" value="1"/>
</dbReference>
<dbReference type="PROSITE" id="PS00678">
    <property type="entry name" value="WD_REPEATS_1"/>
    <property type="match status" value="1"/>
</dbReference>
<dbReference type="PROSITE" id="PS50082">
    <property type="entry name" value="WD_REPEATS_2"/>
    <property type="match status" value="2"/>
</dbReference>
<dbReference type="PROSITE" id="PS50294">
    <property type="entry name" value="WD_REPEATS_REGION"/>
    <property type="match status" value="1"/>
</dbReference>
<gene>
    <name type="primary">MTC5</name>
    <name type="synonym">SEA3</name>
    <name type="ordered locus">YDR128W</name>
</gene>
<feature type="chain" id="PRO_0000253807" description="Maintenance of telomere capping protein 5">
    <location>
        <begin position="1"/>
        <end position="1148"/>
    </location>
</feature>
<feature type="repeat" description="WD 1">
    <location>
        <begin position="63"/>
        <end position="106"/>
    </location>
</feature>
<feature type="repeat" description="WD 2">
    <location>
        <begin position="112"/>
        <end position="152"/>
    </location>
</feature>
<feature type="repeat" description="WD 3">
    <location>
        <begin position="156"/>
        <end position="195"/>
    </location>
</feature>
<feature type="repeat" description="WD 4">
    <location>
        <begin position="199"/>
        <end position="239"/>
    </location>
</feature>
<feature type="repeat" description="WD 5">
    <location>
        <begin position="299"/>
        <end position="348"/>
    </location>
</feature>
<feature type="domain" description="RWD" evidence="1">
    <location>
        <begin position="432"/>
        <end position="543"/>
    </location>
</feature>
<feature type="region of interest" description="Disordered" evidence="2">
    <location>
        <begin position="963"/>
        <end position="990"/>
    </location>
</feature>
<feature type="compositionally biased region" description="Polar residues" evidence="2">
    <location>
        <begin position="964"/>
        <end position="990"/>
    </location>
</feature>
<feature type="modified residue" description="Phosphoserine" evidence="8">
    <location>
        <position position="759"/>
    </location>
</feature>
<feature type="strand" evidence="10">
    <location>
        <begin position="13"/>
        <end position="17"/>
    </location>
</feature>
<feature type="strand" evidence="10">
    <location>
        <begin position="19"/>
        <end position="22"/>
    </location>
</feature>
<feature type="strand" evidence="10">
    <location>
        <begin position="29"/>
        <end position="32"/>
    </location>
</feature>
<feature type="strand" evidence="10">
    <location>
        <begin position="36"/>
        <end position="43"/>
    </location>
</feature>
<feature type="strand" evidence="10">
    <location>
        <begin position="46"/>
        <end position="53"/>
    </location>
</feature>
<feature type="strand" evidence="10">
    <location>
        <begin position="60"/>
        <end position="63"/>
    </location>
</feature>
<feature type="strand" evidence="10">
    <location>
        <begin position="73"/>
        <end position="75"/>
    </location>
</feature>
<feature type="strand" evidence="10">
    <location>
        <begin position="84"/>
        <end position="89"/>
    </location>
</feature>
<feature type="strand" evidence="10">
    <location>
        <begin position="92"/>
        <end position="97"/>
    </location>
</feature>
<feature type="strand" evidence="10">
    <location>
        <begin position="102"/>
        <end position="104"/>
    </location>
</feature>
<feature type="strand" evidence="10">
    <location>
        <begin position="106"/>
        <end position="111"/>
    </location>
</feature>
<feature type="strand" evidence="10">
    <location>
        <begin position="117"/>
        <end position="122"/>
    </location>
</feature>
<feature type="strand" evidence="10">
    <location>
        <begin position="124"/>
        <end position="126"/>
    </location>
</feature>
<feature type="strand" evidence="10">
    <location>
        <begin position="129"/>
        <end position="134"/>
    </location>
</feature>
<feature type="strand" evidence="10">
    <location>
        <begin position="139"/>
        <end position="146"/>
    </location>
</feature>
<feature type="strand" evidence="10">
    <location>
        <begin position="151"/>
        <end position="154"/>
    </location>
</feature>
<feature type="strand" evidence="10">
    <location>
        <begin position="157"/>
        <end position="159"/>
    </location>
</feature>
<feature type="strand" evidence="10">
    <location>
        <begin position="161"/>
        <end position="166"/>
    </location>
</feature>
<feature type="strand" evidence="10">
    <location>
        <begin position="168"/>
        <end position="170"/>
    </location>
</feature>
<feature type="strand" evidence="10">
    <location>
        <begin position="173"/>
        <end position="178"/>
    </location>
</feature>
<feature type="strand" evidence="10">
    <location>
        <begin position="181"/>
        <end position="186"/>
    </location>
</feature>
<feature type="strand" evidence="10">
    <location>
        <begin position="192"/>
        <end position="197"/>
    </location>
</feature>
<feature type="strand" evidence="10">
    <location>
        <begin position="204"/>
        <end position="209"/>
    </location>
</feature>
<feature type="strand" evidence="10">
    <location>
        <begin position="211"/>
        <end position="213"/>
    </location>
</feature>
<feature type="strand" evidence="10">
    <location>
        <begin position="216"/>
        <end position="221"/>
    </location>
</feature>
<feature type="strand" evidence="10">
    <location>
        <begin position="224"/>
        <end position="230"/>
    </location>
</feature>
<feature type="turn" evidence="10">
    <location>
        <begin position="231"/>
        <end position="233"/>
    </location>
</feature>
<feature type="strand" evidence="10">
    <location>
        <begin position="235"/>
        <end position="237"/>
    </location>
</feature>
<feature type="strand" evidence="10">
    <location>
        <begin position="239"/>
        <end position="243"/>
    </location>
</feature>
<feature type="strand" evidence="10">
    <location>
        <begin position="248"/>
        <end position="253"/>
    </location>
</feature>
<feature type="strand" evidence="10">
    <location>
        <begin position="255"/>
        <end position="266"/>
    </location>
</feature>
<feature type="helix" evidence="10">
    <location>
        <begin position="268"/>
        <end position="270"/>
    </location>
</feature>
<feature type="strand" evidence="10">
    <location>
        <begin position="272"/>
        <end position="276"/>
    </location>
</feature>
<feature type="strand" evidence="10">
    <location>
        <begin position="288"/>
        <end position="290"/>
    </location>
</feature>
<feature type="strand" evidence="10">
    <location>
        <begin position="294"/>
        <end position="297"/>
    </location>
</feature>
<feature type="strand" evidence="10">
    <location>
        <begin position="304"/>
        <end position="312"/>
    </location>
</feature>
<feature type="strand" evidence="10">
    <location>
        <begin position="323"/>
        <end position="330"/>
    </location>
</feature>
<feature type="strand" evidence="10">
    <location>
        <begin position="333"/>
        <end position="339"/>
    </location>
</feature>
<feature type="helix" evidence="10">
    <location>
        <begin position="342"/>
        <end position="347"/>
    </location>
</feature>
<feature type="helix" evidence="10">
    <location>
        <begin position="401"/>
        <end position="406"/>
    </location>
</feature>
<feature type="helix" evidence="10">
    <location>
        <begin position="430"/>
        <end position="440"/>
    </location>
</feature>
<feature type="strand" evidence="10">
    <location>
        <begin position="442"/>
        <end position="450"/>
    </location>
</feature>
<feature type="turn" evidence="10">
    <location>
        <begin position="451"/>
        <end position="454"/>
    </location>
</feature>
<feature type="strand" evidence="10">
    <location>
        <begin position="455"/>
        <end position="463"/>
    </location>
</feature>
<feature type="strand" evidence="10">
    <location>
        <begin position="473"/>
        <end position="480"/>
    </location>
</feature>
<feature type="turn" evidence="10">
    <location>
        <begin position="483"/>
        <end position="486"/>
    </location>
</feature>
<feature type="strand" evidence="10">
    <location>
        <begin position="493"/>
        <end position="496"/>
    </location>
</feature>
<feature type="strand" evidence="10">
    <location>
        <begin position="500"/>
        <end position="502"/>
    </location>
</feature>
<feature type="helix" evidence="10">
    <location>
        <begin position="504"/>
        <end position="522"/>
    </location>
</feature>
<feature type="turn" evidence="10">
    <location>
        <begin position="523"/>
        <end position="525"/>
    </location>
</feature>
<feature type="helix" evidence="10">
    <location>
        <begin position="530"/>
        <end position="536"/>
    </location>
</feature>
<feature type="strand" evidence="9">
    <location>
        <begin position="624"/>
        <end position="626"/>
    </location>
</feature>
<feature type="strand" evidence="9">
    <location>
        <begin position="631"/>
        <end position="637"/>
    </location>
</feature>
<feature type="strand" evidence="9">
    <location>
        <begin position="774"/>
        <end position="779"/>
    </location>
</feature>
<feature type="helix" evidence="9">
    <location>
        <begin position="781"/>
        <end position="783"/>
    </location>
</feature>
<feature type="helix" evidence="9">
    <location>
        <begin position="788"/>
        <end position="791"/>
    </location>
</feature>
<feature type="strand" evidence="9">
    <location>
        <begin position="796"/>
        <end position="799"/>
    </location>
</feature>
<feature type="helix" evidence="9">
    <location>
        <begin position="801"/>
        <end position="814"/>
    </location>
</feature>
<feature type="helix" evidence="9">
    <location>
        <begin position="818"/>
        <end position="830"/>
    </location>
</feature>
<feature type="helix" evidence="9">
    <location>
        <begin position="839"/>
        <end position="845"/>
    </location>
</feature>
<feature type="turn" evidence="9">
    <location>
        <begin position="848"/>
        <end position="851"/>
    </location>
</feature>
<feature type="helix" evidence="9">
    <location>
        <begin position="852"/>
        <end position="864"/>
    </location>
</feature>
<feature type="helix" evidence="9">
    <location>
        <begin position="868"/>
        <end position="880"/>
    </location>
</feature>
<feature type="strand" evidence="9">
    <location>
        <begin position="998"/>
        <end position="1001"/>
    </location>
</feature>
<feature type="helix" evidence="9">
    <location>
        <begin position="1005"/>
        <end position="1010"/>
    </location>
</feature>
<feature type="turn" evidence="9">
    <location>
        <begin position="1020"/>
        <end position="1022"/>
    </location>
</feature>
<feature type="helix" evidence="9">
    <location>
        <begin position="1026"/>
        <end position="1039"/>
    </location>
</feature>
<feature type="helix" evidence="9">
    <location>
        <begin position="1043"/>
        <end position="1060"/>
    </location>
</feature>
<feature type="strand" evidence="9">
    <location>
        <begin position="1080"/>
        <end position="1082"/>
    </location>
</feature>
<feature type="helix" evidence="9">
    <location>
        <begin position="1091"/>
        <end position="1095"/>
    </location>
</feature>
<feature type="turn" evidence="9">
    <location>
        <begin position="1099"/>
        <end position="1101"/>
    </location>
</feature>
<feature type="strand" evidence="9">
    <location>
        <begin position="1107"/>
        <end position="1111"/>
    </location>
</feature>
<feature type="strand" evidence="9">
    <location>
        <begin position="1113"/>
        <end position="1115"/>
    </location>
</feature>
<feature type="strand" evidence="9">
    <location>
        <begin position="1118"/>
        <end position="1120"/>
    </location>
</feature>
<feature type="helix" evidence="9">
    <location>
        <begin position="1121"/>
        <end position="1127"/>
    </location>
</feature>
<feature type="turn" evidence="9">
    <location>
        <begin position="1128"/>
        <end position="1130"/>
    </location>
</feature>
<feature type="helix" evidence="9">
    <location>
        <begin position="1142"/>
        <end position="1145"/>
    </location>
</feature>
<reference key="1">
    <citation type="journal article" date="1997" name="Nature">
        <title>The nucleotide sequence of Saccharomyces cerevisiae chromosome IV.</title>
        <authorList>
            <person name="Jacq C."/>
            <person name="Alt-Moerbe J."/>
            <person name="Andre B."/>
            <person name="Arnold W."/>
            <person name="Bahr A."/>
            <person name="Ballesta J.P.G."/>
            <person name="Bargues M."/>
            <person name="Baron L."/>
            <person name="Becker A."/>
            <person name="Biteau N."/>
            <person name="Bloecker H."/>
            <person name="Blugeon C."/>
            <person name="Boskovic J."/>
            <person name="Brandt P."/>
            <person name="Brueckner M."/>
            <person name="Buitrago M.J."/>
            <person name="Coster F."/>
            <person name="Delaveau T."/>
            <person name="del Rey F."/>
            <person name="Dujon B."/>
            <person name="Eide L.G."/>
            <person name="Garcia-Cantalejo J.M."/>
            <person name="Goffeau A."/>
            <person name="Gomez-Peris A."/>
            <person name="Granotier C."/>
            <person name="Hanemann V."/>
            <person name="Hankeln T."/>
            <person name="Hoheisel J.D."/>
            <person name="Jaeger W."/>
            <person name="Jimenez A."/>
            <person name="Jonniaux J.-L."/>
            <person name="Kraemer C."/>
            <person name="Kuester H."/>
            <person name="Laamanen P."/>
            <person name="Legros Y."/>
            <person name="Louis E.J."/>
            <person name="Moeller-Rieker S."/>
            <person name="Monnet A."/>
            <person name="Moro M."/>
            <person name="Mueller-Auer S."/>
            <person name="Nussbaumer B."/>
            <person name="Paricio N."/>
            <person name="Paulin L."/>
            <person name="Perea J."/>
            <person name="Perez-Alonso M."/>
            <person name="Perez-Ortin J.E."/>
            <person name="Pohl T.M."/>
            <person name="Prydz H."/>
            <person name="Purnelle B."/>
            <person name="Rasmussen S.W."/>
            <person name="Remacha M.A."/>
            <person name="Revuelta J.L."/>
            <person name="Rieger M."/>
            <person name="Salom D."/>
            <person name="Saluz H.P."/>
            <person name="Saiz J.E."/>
            <person name="Saren A.-M."/>
            <person name="Schaefer M."/>
            <person name="Scharfe M."/>
            <person name="Schmidt E.R."/>
            <person name="Schneider C."/>
            <person name="Scholler P."/>
            <person name="Schwarz S."/>
            <person name="Soler-Mira A."/>
            <person name="Urrestarazu L.A."/>
            <person name="Verhasselt P."/>
            <person name="Vissers S."/>
            <person name="Voet M."/>
            <person name="Volckaert G."/>
            <person name="Wagner G."/>
            <person name="Wambutt R."/>
            <person name="Wedler E."/>
            <person name="Wedler H."/>
            <person name="Woelfl S."/>
            <person name="Harris D.E."/>
            <person name="Bowman S."/>
            <person name="Brown D."/>
            <person name="Churcher C.M."/>
            <person name="Connor R."/>
            <person name="Dedman K."/>
            <person name="Gentles S."/>
            <person name="Hamlin N."/>
            <person name="Hunt S."/>
            <person name="Jones L."/>
            <person name="McDonald S."/>
            <person name="Murphy L.D."/>
            <person name="Niblett D."/>
            <person name="Odell C."/>
            <person name="Oliver K."/>
            <person name="Rajandream M.A."/>
            <person name="Richards C."/>
            <person name="Shore L."/>
            <person name="Walsh S.V."/>
            <person name="Barrell B.G."/>
            <person name="Dietrich F.S."/>
            <person name="Mulligan J.T."/>
            <person name="Allen E."/>
            <person name="Araujo R."/>
            <person name="Aviles E."/>
            <person name="Berno A."/>
            <person name="Carpenter J."/>
            <person name="Chen E."/>
            <person name="Cherry J.M."/>
            <person name="Chung E."/>
            <person name="Duncan M."/>
            <person name="Hunicke-Smith S."/>
            <person name="Hyman R.W."/>
            <person name="Komp C."/>
            <person name="Lashkari D."/>
            <person name="Lew H."/>
            <person name="Lin D."/>
            <person name="Mosedale D."/>
            <person name="Nakahara K."/>
            <person name="Namath A."/>
            <person name="Oefner P."/>
            <person name="Oh C."/>
            <person name="Petel F.X."/>
            <person name="Roberts D."/>
            <person name="Schramm S."/>
            <person name="Schroeder M."/>
            <person name="Shogren T."/>
            <person name="Shroff N."/>
            <person name="Winant A."/>
            <person name="Yelton M.A."/>
            <person name="Botstein D."/>
            <person name="Davis R.W."/>
            <person name="Johnston M."/>
            <person name="Andrews S."/>
            <person name="Brinkman R."/>
            <person name="Cooper J."/>
            <person name="Ding H."/>
            <person name="Du Z."/>
            <person name="Favello A."/>
            <person name="Fulton L."/>
            <person name="Gattung S."/>
            <person name="Greco T."/>
            <person name="Hallsworth K."/>
            <person name="Hawkins J."/>
            <person name="Hillier L.W."/>
            <person name="Jier M."/>
            <person name="Johnson D."/>
            <person name="Johnston L."/>
            <person name="Kirsten J."/>
            <person name="Kucaba T."/>
            <person name="Langston Y."/>
            <person name="Latreille P."/>
            <person name="Le T."/>
            <person name="Mardis E."/>
            <person name="Menezes S."/>
            <person name="Miller N."/>
            <person name="Nhan M."/>
            <person name="Pauley A."/>
            <person name="Peluso D."/>
            <person name="Rifkin L."/>
            <person name="Riles L."/>
            <person name="Taich A."/>
            <person name="Trevaskis E."/>
            <person name="Vignati D."/>
            <person name="Wilcox L."/>
            <person name="Wohldman P."/>
            <person name="Vaudin M."/>
            <person name="Wilson R."/>
            <person name="Waterston R."/>
            <person name="Albermann K."/>
            <person name="Hani J."/>
            <person name="Heumann K."/>
            <person name="Kleine K."/>
            <person name="Mewes H.-W."/>
            <person name="Zollner A."/>
            <person name="Zaccaria P."/>
        </authorList>
    </citation>
    <scope>NUCLEOTIDE SEQUENCE [LARGE SCALE GENOMIC DNA]</scope>
    <source>
        <strain>ATCC 204508 / S288c</strain>
    </source>
</reference>
<reference key="2">
    <citation type="journal article" date="2014" name="G3 (Bethesda)">
        <title>The reference genome sequence of Saccharomyces cerevisiae: Then and now.</title>
        <authorList>
            <person name="Engel S.R."/>
            <person name="Dietrich F.S."/>
            <person name="Fisk D.G."/>
            <person name="Binkley G."/>
            <person name="Balakrishnan R."/>
            <person name="Costanzo M.C."/>
            <person name="Dwight S.S."/>
            <person name="Hitz B.C."/>
            <person name="Karra K."/>
            <person name="Nash R.S."/>
            <person name="Weng S."/>
            <person name="Wong E.D."/>
            <person name="Lloyd P."/>
            <person name="Skrzypek M.S."/>
            <person name="Miyasato S.R."/>
            <person name="Simison M."/>
            <person name="Cherry J.M."/>
        </authorList>
    </citation>
    <scope>GENOME REANNOTATION</scope>
    <source>
        <strain>ATCC 204508 / S288c</strain>
    </source>
</reference>
<reference key="3">
    <citation type="journal article" date="2003" name="Nature">
        <title>Global analysis of protein localization in budding yeast.</title>
        <authorList>
            <person name="Huh W.-K."/>
            <person name="Falvo J.V."/>
            <person name="Gerke L.C."/>
            <person name="Carroll A.S."/>
            <person name="Howson R.W."/>
            <person name="Weissman J.S."/>
            <person name="O'Shea E.K."/>
        </authorList>
    </citation>
    <scope>SUBCELLULAR LOCATION [LARGE SCALE ANALYSIS]</scope>
</reference>
<reference key="4">
    <citation type="journal article" date="2003" name="Nature">
        <title>Global analysis of protein expression in yeast.</title>
        <authorList>
            <person name="Ghaemmaghami S."/>
            <person name="Huh W.-K."/>
            <person name="Bower K."/>
            <person name="Howson R.W."/>
            <person name="Belle A."/>
            <person name="Dephoure N."/>
            <person name="O'Shea E.K."/>
            <person name="Weissman J.S."/>
        </authorList>
    </citation>
    <scope>LEVEL OF PROTEIN EXPRESSION [LARGE SCALE ANALYSIS]</scope>
</reference>
<reference key="5">
    <citation type="journal article" date="2008" name="Genetics">
        <title>A genomewide suppressor and enhancer analysis of cdc13-1 reveals varied cellular processes influencing telomere capping in Saccharomyces cerevisiae.</title>
        <authorList>
            <person name="Addinall S.G."/>
            <person name="Downey M."/>
            <person name="Yu M."/>
            <person name="Zubko M.K."/>
            <person name="Dewar J."/>
            <person name="Leake A."/>
            <person name="Hallinan J."/>
            <person name="Shaw O."/>
            <person name="James K."/>
            <person name="Wilkinson D.J."/>
            <person name="Wipat A."/>
            <person name="Durocher D."/>
            <person name="Lydall D."/>
        </authorList>
    </citation>
    <scope>FUNCTION</scope>
</reference>
<reference key="6">
    <citation type="journal article" date="2008" name="Mol. Cell. Proteomics">
        <title>A multidimensional chromatography technology for in-depth phosphoproteome analysis.</title>
        <authorList>
            <person name="Albuquerque C.P."/>
            <person name="Smolka M.B."/>
            <person name="Payne S.H."/>
            <person name="Bafna V."/>
            <person name="Eng J."/>
            <person name="Zhou H."/>
        </authorList>
    </citation>
    <scope>PHOSPHORYLATION [LARGE SCALE ANALYSIS] AT SER-759</scope>
    <scope>IDENTIFICATION BY MASS SPECTROMETRY [LARGE SCALE ANALYSIS]</scope>
</reference>
<reference key="7">
    <citation type="journal article" date="2011" name="Mol. Cell. Proteomics">
        <title>A conserved coatomer-related complex containing Sec13 and Seh1 dynamically associates with the vacuole in Saccharomyces cerevisiae.</title>
        <authorList>
            <person name="Dokudovskaya S."/>
            <person name="Waharte F."/>
            <person name="Schlessinger A."/>
            <person name="Pieper U."/>
            <person name="Devos D.P."/>
            <person name="Cristea I.M."/>
            <person name="Williams R."/>
            <person name="Salamero J."/>
            <person name="Chait B.T."/>
            <person name="Sali A."/>
            <person name="Field M.C."/>
            <person name="Rout M.P."/>
            <person name="Dargemont C."/>
        </authorList>
    </citation>
    <scope>SUBCELLULAR LOCATION</scope>
    <scope>IDENTIFICATION IN THE SEA COMPLEX</scope>
    <scope>FUNCTION</scope>
</reference>
<sequence length="1148" mass="130946">MCSSINEGPYNSPTFGKSLSLKVDGGFNAVSINPSGRDIVLASRQGLYIIDLDDPFTPPRWLHHITPWQVADVQWSPHPAKPYWIVSTSNQKAIIWNLAKSSSNAIEFVLHGHSRAITDINFNPQHPDVLATCSVDTYVHAWDMRSPHRPFYSTSSWRSAASQVKWNYKDPNVLASSHGNDIFVWDLRKGSTPLCSLKGHVSSVNSIDFNRFKYSEIMSSSNDGTVKFWDYSKSTTESKRTVTTNFPIWRGRYLPFGEGYCIMPMVGGNNAVYLINLCDDDDSEQNKKTKLQPIYAFKGHSDRVIDFLWRSRHTCDGDYDDREFQLVTWSKDCDLKLWPISDSIYGKVNFDRGKRLEEKLPDYDYCSYNKEPENRENVQKNEFRRLRENFVTTSGLKKNKTNHITWLSGIRMNSATSQEDLFNETKIQNLGEEVSAIGHKFPKVVFEKISVSTRELCLTLNGPWSEENPDDYIFLRISINFPLNYPNKGDPPKFTIEENSNLTMSKRQEILSNLATIGQKYTDSNLYCLEPCIRFVLGEKVSLEDIEEGQEPLLNFDIADHIDFEELSSLDSSYSDSQNPENLSSQSDIESYKEALVFPDTSNQGLDFGRNLALDTTPVPNGCGSCWTATGELFCFFANEKKPEKKQNAIIKLSQKEAGVEKHPFKIEPQVLYDKEVDSSVITAADELKARPKRYVDTLGLGGGTNGDSRTYFDDETSSDDSFDSVADDWDDILRNDIIVRTKIPILRGNFKAFSSVHSESGKTVESTKKNKNLVISKNFSSLLSDRKELALEYLFMDATPEGFARNNALVAEKFDLDEISHCWQILSDMLIDQSDYDPYTTIWNNHPMGIKWFIKEAIVYFERQQNLQMLAMLCCVILSARRKKIPARYYGQELENMEGTIVFNDNESQNTSFWKGSDAFSTRSRSSTVTPNFYGNHLRGKNIHGGDNSSIRSDDHHARLRTHNTLNGSSKFTEPAQKQGSRAISSSPFHSRMPDIKVELLHDDIIEAYEQEDLLHLEVSDIPKFQTYIYQYSKLLFRWGLPLERVKILKVSTDFRSSYSSQGIPPNNNKKSPYNGVLTHWIENNEFGEEKFLARNCNYCDLRVTRSSFICGNCQHVLHSSCARIWWEIGDECPSGCGCNCPEMFDA</sequence>
<proteinExistence type="evidence at protein level"/>
<keyword id="KW-0002">3D-structure</keyword>
<keyword id="KW-0472">Membrane</keyword>
<keyword id="KW-0597">Phosphoprotein</keyword>
<keyword id="KW-0653">Protein transport</keyword>
<keyword id="KW-1185">Reference proteome</keyword>
<keyword id="KW-0677">Repeat</keyword>
<keyword id="KW-0813">Transport</keyword>
<keyword id="KW-0926">Vacuole</keyword>
<keyword id="KW-0853">WD repeat</keyword>